<proteinExistence type="inferred from homology"/>
<comment type="function">
    <text evidence="1">One of the proteins required for the normal export of preproteins out of the cell cytoplasm. It is a molecular chaperone that binds to a subset of precursor proteins, maintaining them in a translocation-competent state. It also specifically binds to its receptor SecA.</text>
</comment>
<comment type="subunit">
    <text evidence="1">Homotetramer, a dimer of dimers. One homotetramer interacts with 1 SecA dimer.</text>
</comment>
<comment type="subcellular location">
    <subcellularLocation>
        <location evidence="1">Cytoplasm</location>
    </subcellularLocation>
</comment>
<comment type="similarity">
    <text evidence="1">Belongs to the SecB family.</text>
</comment>
<gene>
    <name evidence="1" type="primary">secB</name>
    <name type="ordered locus">NT01EI_3816</name>
</gene>
<reference key="1">
    <citation type="submission" date="2009-03" db="EMBL/GenBank/DDBJ databases">
        <title>Complete genome sequence of Edwardsiella ictaluri 93-146.</title>
        <authorList>
            <person name="Williams M.L."/>
            <person name="Gillaspy A.F."/>
            <person name="Dyer D.W."/>
            <person name="Thune R.L."/>
            <person name="Waldbieser G.C."/>
            <person name="Schuster S.C."/>
            <person name="Gipson J."/>
            <person name="Zaitshik J."/>
            <person name="Landry C."/>
            <person name="Lawrence M.L."/>
        </authorList>
    </citation>
    <scope>NUCLEOTIDE SEQUENCE [LARGE SCALE GENOMIC DNA]</scope>
    <source>
        <strain>93-146</strain>
    </source>
</reference>
<evidence type="ECO:0000255" key="1">
    <source>
        <dbReference type="HAMAP-Rule" id="MF_00821"/>
    </source>
</evidence>
<protein>
    <recommendedName>
        <fullName evidence="1">Protein-export protein SecB</fullName>
    </recommendedName>
</protein>
<keyword id="KW-0143">Chaperone</keyword>
<keyword id="KW-0963">Cytoplasm</keyword>
<keyword id="KW-0653">Protein transport</keyword>
<keyword id="KW-0811">Translocation</keyword>
<keyword id="KW-0813">Transport</keyword>
<dbReference type="EMBL" id="CP001600">
    <property type="protein sequence ID" value="ACR70940.1"/>
    <property type="molecule type" value="Genomic_DNA"/>
</dbReference>
<dbReference type="RefSeq" id="WP_015872973.1">
    <property type="nucleotide sequence ID" value="NZ_CP169062.1"/>
</dbReference>
<dbReference type="SMR" id="C5BC34"/>
<dbReference type="STRING" id="67780.B6E78_10655"/>
<dbReference type="GeneID" id="69540641"/>
<dbReference type="KEGG" id="eic:NT01EI_3816"/>
<dbReference type="PATRIC" id="fig|634503.3.peg.3409"/>
<dbReference type="HOGENOM" id="CLU_111574_1_0_6"/>
<dbReference type="OrthoDB" id="9795145at2"/>
<dbReference type="Proteomes" id="UP000001485">
    <property type="component" value="Chromosome"/>
</dbReference>
<dbReference type="GO" id="GO:0005737">
    <property type="term" value="C:cytoplasm"/>
    <property type="evidence" value="ECO:0007669"/>
    <property type="project" value="UniProtKB-SubCell"/>
</dbReference>
<dbReference type="GO" id="GO:0051082">
    <property type="term" value="F:unfolded protein binding"/>
    <property type="evidence" value="ECO:0007669"/>
    <property type="project" value="InterPro"/>
</dbReference>
<dbReference type="GO" id="GO:0006457">
    <property type="term" value="P:protein folding"/>
    <property type="evidence" value="ECO:0007669"/>
    <property type="project" value="UniProtKB-UniRule"/>
</dbReference>
<dbReference type="GO" id="GO:0051262">
    <property type="term" value="P:protein tetramerization"/>
    <property type="evidence" value="ECO:0007669"/>
    <property type="project" value="InterPro"/>
</dbReference>
<dbReference type="GO" id="GO:0015031">
    <property type="term" value="P:protein transport"/>
    <property type="evidence" value="ECO:0007669"/>
    <property type="project" value="UniProtKB-UniRule"/>
</dbReference>
<dbReference type="CDD" id="cd00557">
    <property type="entry name" value="Translocase_SecB"/>
    <property type="match status" value="1"/>
</dbReference>
<dbReference type="FunFam" id="3.10.420.10:FF:000001">
    <property type="entry name" value="Protein-export chaperone SecB"/>
    <property type="match status" value="1"/>
</dbReference>
<dbReference type="Gene3D" id="3.10.420.10">
    <property type="entry name" value="SecB-like"/>
    <property type="match status" value="1"/>
</dbReference>
<dbReference type="HAMAP" id="MF_00821">
    <property type="entry name" value="SecB"/>
    <property type="match status" value="1"/>
</dbReference>
<dbReference type="InterPro" id="IPR003708">
    <property type="entry name" value="SecB"/>
</dbReference>
<dbReference type="InterPro" id="IPR035958">
    <property type="entry name" value="SecB-like_sf"/>
</dbReference>
<dbReference type="NCBIfam" id="NF004390">
    <property type="entry name" value="PRK05751.1-1"/>
    <property type="match status" value="1"/>
</dbReference>
<dbReference type="NCBIfam" id="NF004393">
    <property type="entry name" value="PRK05751.1-4"/>
    <property type="match status" value="1"/>
</dbReference>
<dbReference type="NCBIfam" id="TIGR00809">
    <property type="entry name" value="secB"/>
    <property type="match status" value="1"/>
</dbReference>
<dbReference type="PANTHER" id="PTHR36918">
    <property type="match status" value="1"/>
</dbReference>
<dbReference type="PANTHER" id="PTHR36918:SF1">
    <property type="entry name" value="PROTEIN-EXPORT PROTEIN SECB"/>
    <property type="match status" value="1"/>
</dbReference>
<dbReference type="Pfam" id="PF02556">
    <property type="entry name" value="SecB"/>
    <property type="match status" value="1"/>
</dbReference>
<dbReference type="PRINTS" id="PR01594">
    <property type="entry name" value="SECBCHAPRONE"/>
</dbReference>
<dbReference type="SUPFAM" id="SSF54611">
    <property type="entry name" value="SecB-like"/>
    <property type="match status" value="1"/>
</dbReference>
<organism>
    <name type="scientific">Edwardsiella ictaluri (strain 93-146)</name>
    <dbReference type="NCBI Taxonomy" id="634503"/>
    <lineage>
        <taxon>Bacteria</taxon>
        <taxon>Pseudomonadati</taxon>
        <taxon>Pseudomonadota</taxon>
        <taxon>Gammaproteobacteria</taxon>
        <taxon>Enterobacterales</taxon>
        <taxon>Hafniaceae</taxon>
        <taxon>Edwardsiella</taxon>
    </lineage>
</organism>
<name>SECB_EDWI9</name>
<sequence length="153" mass="16964">MSEQNNTEMSFQIQRIYTKDISFEAPNAPAVFQKEWQPEVKLDLDTASNQLADGVFEVVLRVTVTATMGEETAFLCEVQQAGIFTIAGIDGTQMAHCLGAYCPNILFPYARECITNLVARGTFPQLNLAPVNFDALFMSYLQQQAGEEPTQEA</sequence>
<feature type="chain" id="PRO_1000213105" description="Protein-export protein SecB">
    <location>
        <begin position="1"/>
        <end position="153"/>
    </location>
</feature>
<accession>C5BC34</accession>